<name>LGT_STRPB</name>
<proteinExistence type="inferred from homology"/>
<evidence type="ECO:0000255" key="1">
    <source>
        <dbReference type="HAMAP-Rule" id="MF_01147"/>
    </source>
</evidence>
<protein>
    <recommendedName>
        <fullName evidence="1">Phosphatidylglycerol--prolipoprotein diacylglyceryl transferase</fullName>
        <ecNumber evidence="1">2.5.1.145</ecNumber>
    </recommendedName>
</protein>
<dbReference type="EC" id="2.5.1.145" evidence="1"/>
<dbReference type="EMBL" id="CP000261">
    <property type="protein sequence ID" value="ABF35549.1"/>
    <property type="molecule type" value="Genomic_DNA"/>
</dbReference>
<dbReference type="SMR" id="Q1JCV9"/>
<dbReference type="KEGG" id="spj:MGAS2096_Spy0497"/>
<dbReference type="HOGENOM" id="CLU_013386_0_1_9"/>
<dbReference type="UniPathway" id="UPA00664"/>
<dbReference type="GO" id="GO:0005886">
    <property type="term" value="C:plasma membrane"/>
    <property type="evidence" value="ECO:0007669"/>
    <property type="project" value="UniProtKB-SubCell"/>
</dbReference>
<dbReference type="GO" id="GO:0008961">
    <property type="term" value="F:phosphatidylglycerol-prolipoprotein diacylglyceryl transferase activity"/>
    <property type="evidence" value="ECO:0007669"/>
    <property type="project" value="UniProtKB-UniRule"/>
</dbReference>
<dbReference type="GO" id="GO:0042158">
    <property type="term" value="P:lipoprotein biosynthetic process"/>
    <property type="evidence" value="ECO:0007669"/>
    <property type="project" value="UniProtKB-UniRule"/>
</dbReference>
<dbReference type="HAMAP" id="MF_01147">
    <property type="entry name" value="Lgt"/>
    <property type="match status" value="1"/>
</dbReference>
<dbReference type="InterPro" id="IPR001640">
    <property type="entry name" value="Lgt"/>
</dbReference>
<dbReference type="NCBIfam" id="TIGR00544">
    <property type="entry name" value="lgt"/>
    <property type="match status" value="1"/>
</dbReference>
<dbReference type="PANTHER" id="PTHR30589:SF0">
    <property type="entry name" value="PHOSPHATIDYLGLYCEROL--PROLIPOPROTEIN DIACYLGLYCERYL TRANSFERASE"/>
    <property type="match status" value="1"/>
</dbReference>
<dbReference type="PANTHER" id="PTHR30589">
    <property type="entry name" value="PROLIPOPROTEIN DIACYLGLYCERYL TRANSFERASE"/>
    <property type="match status" value="1"/>
</dbReference>
<dbReference type="Pfam" id="PF01790">
    <property type="entry name" value="LGT"/>
    <property type="match status" value="1"/>
</dbReference>
<dbReference type="PROSITE" id="PS01311">
    <property type="entry name" value="LGT"/>
    <property type="match status" value="1"/>
</dbReference>
<accession>Q1JCV9</accession>
<feature type="chain" id="PRO_1000053510" description="Phosphatidylglycerol--prolipoprotein diacylglyceryl transferase">
    <location>
        <begin position="1"/>
        <end position="259"/>
    </location>
</feature>
<feature type="transmembrane region" description="Helical" evidence="1">
    <location>
        <begin position="12"/>
        <end position="32"/>
    </location>
</feature>
<feature type="transmembrane region" description="Helical" evidence="1">
    <location>
        <begin position="41"/>
        <end position="61"/>
    </location>
</feature>
<feature type="transmembrane region" description="Helical" evidence="1">
    <location>
        <begin position="80"/>
        <end position="100"/>
    </location>
</feature>
<feature type="transmembrane region" description="Helical" evidence="1">
    <location>
        <begin position="109"/>
        <end position="129"/>
    </location>
</feature>
<feature type="transmembrane region" description="Helical" evidence="1">
    <location>
        <begin position="167"/>
        <end position="187"/>
    </location>
</feature>
<feature type="transmembrane region" description="Helical" evidence="1">
    <location>
        <begin position="194"/>
        <end position="214"/>
    </location>
</feature>
<feature type="transmembrane region" description="Helical" evidence="1">
    <location>
        <begin position="226"/>
        <end position="246"/>
    </location>
</feature>
<feature type="binding site" evidence="1">
    <location>
        <position position="131"/>
    </location>
    <ligand>
        <name>a 1,2-diacyl-sn-glycero-3-phospho-(1'-sn-glycerol)</name>
        <dbReference type="ChEBI" id="CHEBI:64716"/>
    </ligand>
</feature>
<gene>
    <name evidence="1" type="primary">lgt</name>
    <name type="ordered locus">MGAS2096_Spy0497</name>
</gene>
<comment type="function">
    <text evidence="1">Catalyzes the transfer of the diacylglyceryl group from phosphatidylglycerol to the sulfhydryl group of the N-terminal cysteine of a prolipoprotein, the first step in the formation of mature lipoproteins.</text>
</comment>
<comment type="catalytic activity">
    <reaction evidence="1">
        <text>L-cysteinyl-[prolipoprotein] + a 1,2-diacyl-sn-glycero-3-phospho-(1'-sn-glycerol) = an S-1,2-diacyl-sn-glyceryl-L-cysteinyl-[prolipoprotein] + sn-glycerol 1-phosphate + H(+)</text>
        <dbReference type="Rhea" id="RHEA:56712"/>
        <dbReference type="Rhea" id="RHEA-COMP:14679"/>
        <dbReference type="Rhea" id="RHEA-COMP:14680"/>
        <dbReference type="ChEBI" id="CHEBI:15378"/>
        <dbReference type="ChEBI" id="CHEBI:29950"/>
        <dbReference type="ChEBI" id="CHEBI:57685"/>
        <dbReference type="ChEBI" id="CHEBI:64716"/>
        <dbReference type="ChEBI" id="CHEBI:140658"/>
        <dbReference type="EC" id="2.5.1.145"/>
    </reaction>
</comment>
<comment type="pathway">
    <text evidence="1">Protein modification; lipoprotein biosynthesis (diacylglyceryl transfer).</text>
</comment>
<comment type="subcellular location">
    <subcellularLocation>
        <location evidence="1">Cell membrane</location>
        <topology evidence="1">Multi-pass membrane protein</topology>
    </subcellularLocation>
</comment>
<comment type="similarity">
    <text evidence="1">Belongs to the Lgt family.</text>
</comment>
<keyword id="KW-1003">Cell membrane</keyword>
<keyword id="KW-0472">Membrane</keyword>
<keyword id="KW-0808">Transferase</keyword>
<keyword id="KW-0812">Transmembrane</keyword>
<keyword id="KW-1133">Transmembrane helix</keyword>
<sequence length="259" mass="29420">MINPIALKCGPLAIHWYALCILSGLVLAVYLASKEAPKKGISSDAIFDFILIAFPLAIVGARIYYVIFEWSYYVKHLDEIIAIWNGGIAIYGGLITGALVLLAYCYNKVLNPIHFLDIAAPSVMVAQAIGRWGNFINQEAYGKAVSQLNYLPSFIQKQMFIEGSYRIPTFLYESLWNLLGFVIIMMWRRKPKSLLDGEIFAFYLIWYGSGRLVIEGMRTDSLMFLGIRISQYVSALLIIIGLIFVIKRRRQKGISYYQE</sequence>
<reference key="1">
    <citation type="journal article" date="2006" name="Proc. Natl. Acad. Sci. U.S.A.">
        <title>Molecular genetic anatomy of inter- and intraserotype variation in the human bacterial pathogen group A Streptococcus.</title>
        <authorList>
            <person name="Beres S.B."/>
            <person name="Richter E.W."/>
            <person name="Nagiec M.J."/>
            <person name="Sumby P."/>
            <person name="Porcella S.F."/>
            <person name="DeLeo F.R."/>
            <person name="Musser J.M."/>
        </authorList>
    </citation>
    <scope>NUCLEOTIDE SEQUENCE [LARGE SCALE GENOMIC DNA]</scope>
    <source>
        <strain>MGAS2096</strain>
    </source>
</reference>
<organism>
    <name type="scientific">Streptococcus pyogenes serotype M12 (strain MGAS2096)</name>
    <dbReference type="NCBI Taxonomy" id="370553"/>
    <lineage>
        <taxon>Bacteria</taxon>
        <taxon>Bacillati</taxon>
        <taxon>Bacillota</taxon>
        <taxon>Bacilli</taxon>
        <taxon>Lactobacillales</taxon>
        <taxon>Streptococcaceae</taxon>
        <taxon>Streptococcus</taxon>
    </lineage>
</organism>